<feature type="chain" id="PRO_0000194408" description="AMP deaminase 2">
    <location>
        <begin position="1"/>
        <end position="824"/>
    </location>
</feature>
<feature type="region of interest" description="Disordered" evidence="4">
    <location>
        <begin position="1"/>
        <end position="43"/>
    </location>
</feature>
<feature type="compositionally biased region" description="Basic residues" evidence="4">
    <location>
        <begin position="10"/>
        <end position="20"/>
    </location>
</feature>
<feature type="active site" description="Proton acceptor" evidence="3">
    <location>
        <position position="655"/>
    </location>
</feature>
<feature type="binding site" evidence="1">
    <location>
        <position position="364"/>
    </location>
    <ligand>
        <name>Zn(2+)</name>
        <dbReference type="ChEBI" id="CHEBI:29105"/>
        <note>catalytic</note>
    </ligand>
</feature>
<feature type="binding site" evidence="1">
    <location>
        <position position="366"/>
    </location>
    <ligand>
        <name>substrate</name>
    </ligand>
</feature>
<feature type="binding site" evidence="1">
    <location>
        <position position="366"/>
    </location>
    <ligand>
        <name>Zn(2+)</name>
        <dbReference type="ChEBI" id="CHEBI:29105"/>
        <note>catalytic</note>
    </ligand>
</feature>
<feature type="binding site" evidence="1">
    <location>
        <begin position="435"/>
        <end position="440"/>
    </location>
    <ligand>
        <name>substrate</name>
    </ligand>
</feature>
<feature type="binding site" evidence="1">
    <location>
        <position position="633"/>
    </location>
    <ligand>
        <name>Zn(2+)</name>
        <dbReference type="ChEBI" id="CHEBI:29105"/>
        <note>catalytic</note>
    </ligand>
</feature>
<feature type="binding site" evidence="1">
    <location>
        <position position="636"/>
    </location>
    <ligand>
        <name>substrate</name>
    </ligand>
</feature>
<feature type="binding site" evidence="1">
    <location>
        <position position="710"/>
    </location>
    <ligand>
        <name>Zn(2+)</name>
        <dbReference type="ChEBI" id="CHEBI:29105"/>
        <note>catalytic</note>
    </ligand>
</feature>
<feature type="binding site" evidence="1">
    <location>
        <begin position="711"/>
        <end position="714"/>
    </location>
    <ligand>
        <name>substrate</name>
    </ligand>
</feature>
<feature type="modified residue" description="Omega-N-methylarginine" evidence="13">
    <location>
        <position position="44"/>
    </location>
</feature>
<feature type="modified residue" description="Phosphoserine" evidence="2">
    <location>
        <position position="45"/>
    </location>
</feature>
<feature type="modified residue" description="Phosphoserine" evidence="2">
    <location>
        <position position="63"/>
    </location>
</feature>
<feature type="modified residue" description="Phosphoserine" evidence="2">
    <location>
        <position position="79"/>
    </location>
</feature>
<feature type="modified residue" description="Phosphotyrosine" evidence="10">
    <location>
        <position position="90"/>
    </location>
</feature>
<feature type="modified residue" description="Phosphoserine" evidence="2">
    <location>
        <position position="96"/>
    </location>
</feature>
<feature type="modified residue" description="Phosphoserine" evidence="9 11 12">
    <location>
        <position position="113"/>
    </location>
</feature>
<feature type="modified residue" description="Phosphothreonine" evidence="2">
    <location>
        <position position="133"/>
    </location>
</feature>
<feature type="modified residue" description="Phosphoserine" evidence="9 12">
    <location>
        <position position="135"/>
    </location>
</feature>
<feature type="modified residue" description="Phosphoserine" evidence="2">
    <location>
        <position position="137"/>
    </location>
</feature>
<feature type="splice variant" id="VSP_061947" description="In isoform 1.">
    <original>MASYPGPGKSKAKYPFKKRAGLQASAAAP</original>
    <variation>MAS</variation>
    <location>
        <begin position="1"/>
        <end position="29"/>
    </location>
</feature>
<organism>
    <name type="scientific">Mus musculus</name>
    <name type="common">Mouse</name>
    <dbReference type="NCBI Taxonomy" id="10090"/>
    <lineage>
        <taxon>Eukaryota</taxon>
        <taxon>Metazoa</taxon>
        <taxon>Chordata</taxon>
        <taxon>Craniata</taxon>
        <taxon>Vertebrata</taxon>
        <taxon>Euteleostomi</taxon>
        <taxon>Mammalia</taxon>
        <taxon>Eutheria</taxon>
        <taxon>Euarchontoglires</taxon>
        <taxon>Glires</taxon>
        <taxon>Rodentia</taxon>
        <taxon>Myomorpha</taxon>
        <taxon>Muroidea</taxon>
        <taxon>Muridae</taxon>
        <taxon>Murinae</taxon>
        <taxon>Mus</taxon>
        <taxon>Mus</taxon>
    </lineage>
</organism>
<evidence type="ECO:0000250" key="1"/>
<evidence type="ECO:0000250" key="2">
    <source>
        <dbReference type="UniProtKB" id="Q01433"/>
    </source>
</evidence>
<evidence type="ECO:0000255" key="3">
    <source>
        <dbReference type="PROSITE-ProRule" id="PRU10104"/>
    </source>
</evidence>
<evidence type="ECO:0000256" key="4">
    <source>
        <dbReference type="SAM" id="MobiDB-lite"/>
    </source>
</evidence>
<evidence type="ECO:0000269" key="5">
    <source>
    </source>
</evidence>
<evidence type="ECO:0000305" key="6"/>
<evidence type="ECO:0000305" key="7">
    <source>
    </source>
</evidence>
<evidence type="ECO:0000312" key="8">
    <source>
        <dbReference type="MGI" id="MGI:88016"/>
    </source>
</evidence>
<evidence type="ECO:0007744" key="9">
    <source>
    </source>
</evidence>
<evidence type="ECO:0007744" key="10">
    <source>
    </source>
</evidence>
<evidence type="ECO:0007744" key="11">
    <source>
    </source>
</evidence>
<evidence type="ECO:0007744" key="12">
    <source>
    </source>
</evidence>
<evidence type="ECO:0007744" key="13">
    <source>
    </source>
</evidence>
<reference key="1">
    <citation type="journal article" date="2005" name="Science">
        <title>The transcriptional landscape of the mammalian genome.</title>
        <authorList>
            <person name="Carninci P."/>
            <person name="Kasukawa T."/>
            <person name="Katayama S."/>
            <person name="Gough J."/>
            <person name="Frith M.C."/>
            <person name="Maeda N."/>
            <person name="Oyama R."/>
            <person name="Ravasi T."/>
            <person name="Lenhard B."/>
            <person name="Wells C."/>
            <person name="Kodzius R."/>
            <person name="Shimokawa K."/>
            <person name="Bajic V.B."/>
            <person name="Brenner S.E."/>
            <person name="Batalov S."/>
            <person name="Forrest A.R."/>
            <person name="Zavolan M."/>
            <person name="Davis M.J."/>
            <person name="Wilming L.G."/>
            <person name="Aidinis V."/>
            <person name="Allen J.E."/>
            <person name="Ambesi-Impiombato A."/>
            <person name="Apweiler R."/>
            <person name="Aturaliya R.N."/>
            <person name="Bailey T.L."/>
            <person name="Bansal M."/>
            <person name="Baxter L."/>
            <person name="Beisel K.W."/>
            <person name="Bersano T."/>
            <person name="Bono H."/>
            <person name="Chalk A.M."/>
            <person name="Chiu K.P."/>
            <person name="Choudhary V."/>
            <person name="Christoffels A."/>
            <person name="Clutterbuck D.R."/>
            <person name="Crowe M.L."/>
            <person name="Dalla E."/>
            <person name="Dalrymple B.P."/>
            <person name="de Bono B."/>
            <person name="Della Gatta G."/>
            <person name="di Bernardo D."/>
            <person name="Down T."/>
            <person name="Engstrom P."/>
            <person name="Fagiolini M."/>
            <person name="Faulkner G."/>
            <person name="Fletcher C.F."/>
            <person name="Fukushima T."/>
            <person name="Furuno M."/>
            <person name="Futaki S."/>
            <person name="Gariboldi M."/>
            <person name="Georgii-Hemming P."/>
            <person name="Gingeras T.R."/>
            <person name="Gojobori T."/>
            <person name="Green R.E."/>
            <person name="Gustincich S."/>
            <person name="Harbers M."/>
            <person name="Hayashi Y."/>
            <person name="Hensch T.K."/>
            <person name="Hirokawa N."/>
            <person name="Hill D."/>
            <person name="Huminiecki L."/>
            <person name="Iacono M."/>
            <person name="Ikeo K."/>
            <person name="Iwama A."/>
            <person name="Ishikawa T."/>
            <person name="Jakt M."/>
            <person name="Kanapin A."/>
            <person name="Katoh M."/>
            <person name="Kawasawa Y."/>
            <person name="Kelso J."/>
            <person name="Kitamura H."/>
            <person name="Kitano H."/>
            <person name="Kollias G."/>
            <person name="Krishnan S.P."/>
            <person name="Kruger A."/>
            <person name="Kummerfeld S.K."/>
            <person name="Kurochkin I.V."/>
            <person name="Lareau L.F."/>
            <person name="Lazarevic D."/>
            <person name="Lipovich L."/>
            <person name="Liu J."/>
            <person name="Liuni S."/>
            <person name="McWilliam S."/>
            <person name="Madan Babu M."/>
            <person name="Madera M."/>
            <person name="Marchionni L."/>
            <person name="Matsuda H."/>
            <person name="Matsuzawa S."/>
            <person name="Miki H."/>
            <person name="Mignone F."/>
            <person name="Miyake S."/>
            <person name="Morris K."/>
            <person name="Mottagui-Tabar S."/>
            <person name="Mulder N."/>
            <person name="Nakano N."/>
            <person name="Nakauchi H."/>
            <person name="Ng P."/>
            <person name="Nilsson R."/>
            <person name="Nishiguchi S."/>
            <person name="Nishikawa S."/>
            <person name="Nori F."/>
            <person name="Ohara O."/>
            <person name="Okazaki Y."/>
            <person name="Orlando V."/>
            <person name="Pang K.C."/>
            <person name="Pavan W.J."/>
            <person name="Pavesi G."/>
            <person name="Pesole G."/>
            <person name="Petrovsky N."/>
            <person name="Piazza S."/>
            <person name="Reed J."/>
            <person name="Reid J.F."/>
            <person name="Ring B.Z."/>
            <person name="Ringwald M."/>
            <person name="Rost B."/>
            <person name="Ruan Y."/>
            <person name="Salzberg S.L."/>
            <person name="Sandelin A."/>
            <person name="Schneider C."/>
            <person name="Schoenbach C."/>
            <person name="Sekiguchi K."/>
            <person name="Semple C.A."/>
            <person name="Seno S."/>
            <person name="Sessa L."/>
            <person name="Sheng Y."/>
            <person name="Shibata Y."/>
            <person name="Shimada H."/>
            <person name="Shimada K."/>
            <person name="Silva D."/>
            <person name="Sinclair B."/>
            <person name="Sperling S."/>
            <person name="Stupka E."/>
            <person name="Sugiura K."/>
            <person name="Sultana R."/>
            <person name="Takenaka Y."/>
            <person name="Taki K."/>
            <person name="Tammoja K."/>
            <person name="Tan S.L."/>
            <person name="Tang S."/>
            <person name="Taylor M.S."/>
            <person name="Tegner J."/>
            <person name="Teichmann S.A."/>
            <person name="Ueda H.R."/>
            <person name="van Nimwegen E."/>
            <person name="Verardo R."/>
            <person name="Wei C.L."/>
            <person name="Yagi K."/>
            <person name="Yamanishi H."/>
            <person name="Zabarovsky E."/>
            <person name="Zhu S."/>
            <person name="Zimmer A."/>
            <person name="Hide W."/>
            <person name="Bult C."/>
            <person name="Grimmond S.M."/>
            <person name="Teasdale R.D."/>
            <person name="Liu E.T."/>
            <person name="Brusic V."/>
            <person name="Quackenbush J."/>
            <person name="Wahlestedt C."/>
            <person name="Mattick J.S."/>
            <person name="Hume D.A."/>
            <person name="Kai C."/>
            <person name="Sasaki D."/>
            <person name="Tomaru Y."/>
            <person name="Fukuda S."/>
            <person name="Kanamori-Katayama M."/>
            <person name="Suzuki M."/>
            <person name="Aoki J."/>
            <person name="Arakawa T."/>
            <person name="Iida J."/>
            <person name="Imamura K."/>
            <person name="Itoh M."/>
            <person name="Kato T."/>
            <person name="Kawaji H."/>
            <person name="Kawagashira N."/>
            <person name="Kawashima T."/>
            <person name="Kojima M."/>
            <person name="Kondo S."/>
            <person name="Konno H."/>
            <person name="Nakano K."/>
            <person name="Ninomiya N."/>
            <person name="Nishio T."/>
            <person name="Okada M."/>
            <person name="Plessy C."/>
            <person name="Shibata K."/>
            <person name="Shiraki T."/>
            <person name="Suzuki S."/>
            <person name="Tagami M."/>
            <person name="Waki K."/>
            <person name="Watahiki A."/>
            <person name="Okamura-Oho Y."/>
            <person name="Suzuki H."/>
            <person name="Kawai J."/>
            <person name="Hayashizaki Y."/>
        </authorList>
    </citation>
    <scope>NUCLEOTIDE SEQUENCE [LARGE SCALE MRNA] (ISOFORM 1)</scope>
    <source>
        <strain>C57BL/6J</strain>
        <strain>NOD</strain>
        <tissue>Lung</tissue>
    </source>
</reference>
<reference key="2">
    <citation type="journal article" date="2009" name="PLoS Biol.">
        <title>Lineage-specific biology revealed by a finished genome assembly of the mouse.</title>
        <authorList>
            <person name="Church D.M."/>
            <person name="Goodstadt L."/>
            <person name="Hillier L.W."/>
            <person name="Zody M.C."/>
            <person name="Goldstein S."/>
            <person name="She X."/>
            <person name="Bult C.J."/>
            <person name="Agarwala R."/>
            <person name="Cherry J.L."/>
            <person name="DiCuccio M."/>
            <person name="Hlavina W."/>
            <person name="Kapustin Y."/>
            <person name="Meric P."/>
            <person name="Maglott D."/>
            <person name="Birtle Z."/>
            <person name="Marques A.C."/>
            <person name="Graves T."/>
            <person name="Zhou S."/>
            <person name="Teague B."/>
            <person name="Potamousis K."/>
            <person name="Churas C."/>
            <person name="Place M."/>
            <person name="Herschleb J."/>
            <person name="Runnheim R."/>
            <person name="Forrest D."/>
            <person name="Amos-Landgraf J."/>
            <person name="Schwartz D.C."/>
            <person name="Cheng Z."/>
            <person name="Lindblad-Toh K."/>
            <person name="Eichler E.E."/>
            <person name="Ponting C.P."/>
        </authorList>
    </citation>
    <scope>NUCLEOTIDE SEQUENCE [LARGE SCALE GENOMIC DNA]</scope>
    <source>
        <strain>C57BL/6J</strain>
    </source>
</reference>
<reference key="3">
    <citation type="journal article" date="2004" name="Genome Res.">
        <title>The status, quality, and expansion of the NIH full-length cDNA project: the Mammalian Gene Collection (MGC).</title>
        <authorList>
            <consortium name="The MGC Project Team"/>
        </authorList>
    </citation>
    <scope>NUCLEOTIDE SEQUENCE [LARGE SCALE MRNA] (ISOFORM 1)</scope>
    <source>
        <strain>C57BL/6J</strain>
        <strain>FVB/N</strain>
        <tissue>Brain</tissue>
        <tissue>Mammary tumor</tissue>
    </source>
</reference>
<reference key="4">
    <citation type="journal article" date="2007" name="J. Immunol.">
        <title>Quantitative time-resolved phosphoproteomic analysis of mast cell signaling.</title>
        <authorList>
            <person name="Cao L."/>
            <person name="Yu K."/>
            <person name="Banh C."/>
            <person name="Nguyen V."/>
            <person name="Ritz A."/>
            <person name="Raphael B.J."/>
            <person name="Kawakami Y."/>
            <person name="Kawakami T."/>
            <person name="Salomon A.R."/>
        </authorList>
    </citation>
    <scope>PHOSPHORYLATION [LARGE SCALE ANALYSIS] AT TYR-90</scope>
    <scope>IDENTIFICATION BY MASS SPECTROMETRY [LARGE SCALE ANALYSIS]</scope>
    <source>
        <tissue>Mast cell</tissue>
    </source>
</reference>
<reference key="5">
    <citation type="journal article" date="2007" name="Proc. Natl. Acad. Sci. U.S.A.">
        <title>Large-scale phosphorylation analysis of mouse liver.</title>
        <authorList>
            <person name="Villen J."/>
            <person name="Beausoleil S.A."/>
            <person name="Gerber S.A."/>
            <person name="Gygi S.P."/>
        </authorList>
    </citation>
    <scope>PHOSPHORYLATION [LARGE SCALE ANALYSIS] AT SER-113 AND SER-135</scope>
    <scope>IDENTIFICATION BY MASS SPECTROMETRY [LARGE SCALE ANALYSIS]</scope>
    <source>
        <tissue>Liver</tissue>
    </source>
</reference>
<reference key="6">
    <citation type="journal article" date="2009" name="Mol. Cell. Proteomics">
        <title>Large scale localization of protein phosphorylation by use of electron capture dissociation mass spectrometry.</title>
        <authorList>
            <person name="Sweet S.M."/>
            <person name="Bailey C.M."/>
            <person name="Cunningham D.L."/>
            <person name="Heath J.K."/>
            <person name="Cooper H.J."/>
        </authorList>
    </citation>
    <scope>PHOSPHORYLATION [LARGE SCALE ANALYSIS] AT SER-113</scope>
    <scope>IDENTIFICATION BY MASS SPECTROMETRY [LARGE SCALE ANALYSIS]</scope>
    <source>
        <tissue>Embryonic fibroblast</tissue>
    </source>
</reference>
<reference key="7">
    <citation type="journal article" date="2010" name="Cell">
        <title>A tissue-specific atlas of mouse protein phosphorylation and expression.</title>
        <authorList>
            <person name="Huttlin E.L."/>
            <person name="Jedrychowski M.P."/>
            <person name="Elias J.E."/>
            <person name="Goswami T."/>
            <person name="Rad R."/>
            <person name="Beausoleil S.A."/>
            <person name="Villen J."/>
            <person name="Haas W."/>
            <person name="Sowa M.E."/>
            <person name="Gygi S.P."/>
        </authorList>
    </citation>
    <scope>PHOSPHORYLATION [LARGE SCALE ANALYSIS] AT SER-113 AND SER-135</scope>
    <scope>IDENTIFICATION BY MASS SPECTROMETRY [LARGE SCALE ANALYSIS]</scope>
    <source>
        <tissue>Brain</tissue>
        <tissue>Brown adipose tissue</tissue>
        <tissue>Kidney</tissue>
        <tissue>Liver</tissue>
        <tissue>Lung</tissue>
        <tissue>Pancreas</tissue>
        <tissue>Spleen</tissue>
        <tissue>Testis</tissue>
    </source>
</reference>
<reference key="8">
    <citation type="journal article" date="2013" name="Cell">
        <title>AMPD2 regulates GTP synthesis and is mutated in a potentially treatable neurodegenerative brainstem disorder.</title>
        <authorList>
            <person name="Akizu N."/>
            <person name="Cantagrel V."/>
            <person name="Schroth J."/>
            <person name="Cai N."/>
            <person name="Vaux K."/>
            <person name="McCloskey D."/>
            <person name="Naviaux R.K."/>
            <person name="Van Vleet J."/>
            <person name="Fenstermaker A.G."/>
            <person name="Silhavy J.L."/>
            <person name="Scheliga J.S."/>
            <person name="Toyama K."/>
            <person name="Morisaki H."/>
            <person name="Sonmez F.M."/>
            <person name="Celep F."/>
            <person name="Oraby A."/>
            <person name="Zaki M.S."/>
            <person name="Al-Baradie R."/>
            <person name="Faqeih E.A."/>
            <person name="Saleh M.A."/>
            <person name="Spencer E."/>
            <person name="Rosti R.O."/>
            <person name="Scott E."/>
            <person name="Nickerson E."/>
            <person name="Gabriel S."/>
            <person name="Morisaki T."/>
            <person name="Holmes E.W."/>
            <person name="Gleeson J.G."/>
        </authorList>
    </citation>
    <scope>DISRUPTION PHENOTYPE</scope>
    <scope>CATALYTIC ACTIVITY</scope>
    <scope>FUNCTION</scope>
</reference>
<reference key="9">
    <citation type="journal article" date="2014" name="Mol. Cell. Proteomics">
        <title>Immunoaffinity enrichment and mass spectrometry analysis of protein methylation.</title>
        <authorList>
            <person name="Guo A."/>
            <person name="Gu H."/>
            <person name="Zhou J."/>
            <person name="Mulhern D."/>
            <person name="Wang Y."/>
            <person name="Lee K.A."/>
            <person name="Yang V."/>
            <person name="Aguiar M."/>
            <person name="Kornhauser J."/>
            <person name="Jia X."/>
            <person name="Ren J."/>
            <person name="Beausoleil S.A."/>
            <person name="Silva J.C."/>
            <person name="Vemulapalli V."/>
            <person name="Bedford M.T."/>
            <person name="Comb M.J."/>
        </authorList>
    </citation>
    <scope>METHYLATION [LARGE SCALE ANALYSIS] AT ARG-44</scope>
    <scope>IDENTIFICATION BY MASS SPECTROMETRY [LARGE SCALE ANALYSIS]</scope>
    <source>
        <tissue>Brain</tissue>
    </source>
</reference>
<proteinExistence type="evidence at protein level"/>
<protein>
    <recommendedName>
        <fullName evidence="6">AMP deaminase 2</fullName>
        <ecNumber evidence="7">3.5.4.6</ecNumber>
    </recommendedName>
    <alternativeName>
        <fullName>AMP deaminase isoform L</fullName>
    </alternativeName>
</protein>
<accession>Q9DBT5</accession>
<accession>A2AE27</accession>
<accession>A2AE28</accession>
<accession>Q91YI2</accession>
<keyword id="KW-0025">Alternative splicing</keyword>
<keyword id="KW-0378">Hydrolase</keyword>
<keyword id="KW-0479">Metal-binding</keyword>
<keyword id="KW-0488">Methylation</keyword>
<keyword id="KW-0546">Nucleotide metabolism</keyword>
<keyword id="KW-0597">Phosphoprotein</keyword>
<keyword id="KW-1185">Reference proteome</keyword>
<keyword id="KW-0862">Zinc</keyword>
<dbReference type="EC" id="3.5.4.6" evidence="7"/>
<dbReference type="EMBL" id="AK004759">
    <property type="protein sequence ID" value="BAB23540.1"/>
    <property type="molecule type" value="mRNA"/>
</dbReference>
<dbReference type="EMBL" id="AK169980">
    <property type="protein sequence ID" value="BAE41495.1"/>
    <property type="molecule type" value="mRNA"/>
</dbReference>
<dbReference type="EMBL" id="AL671854">
    <property type="status" value="NOT_ANNOTATED_CDS"/>
    <property type="molecule type" value="Genomic_DNA"/>
</dbReference>
<dbReference type="EMBL" id="BC016662">
    <property type="protein sequence ID" value="AAH16662.2"/>
    <property type="status" value="ALT_INIT"/>
    <property type="molecule type" value="mRNA"/>
</dbReference>
<dbReference type="EMBL" id="BC049119">
    <property type="protein sequence ID" value="AAH49119.1"/>
    <property type="molecule type" value="mRNA"/>
</dbReference>
<dbReference type="CCDS" id="CCDS17749.1">
    <molecule id="Q9DBT5-1"/>
</dbReference>
<dbReference type="CCDS" id="CCDS84663.1">
    <molecule id="Q9DBT5-2"/>
</dbReference>
<dbReference type="RefSeq" id="NP_001276648.1">
    <molecule id="Q9DBT5-1"/>
    <property type="nucleotide sequence ID" value="NM_001289719.1"/>
</dbReference>
<dbReference type="RefSeq" id="NP_001276649.1">
    <property type="nucleotide sequence ID" value="NM_001289720.1"/>
</dbReference>
<dbReference type="RefSeq" id="NP_001333594.1">
    <molecule id="Q9DBT5-2"/>
    <property type="nucleotide sequence ID" value="NM_001346665.1"/>
</dbReference>
<dbReference type="RefSeq" id="NP_083055.1">
    <molecule id="Q9DBT5-1"/>
    <property type="nucleotide sequence ID" value="NM_028779.5"/>
</dbReference>
<dbReference type="SMR" id="Q9DBT5"/>
<dbReference type="BioGRID" id="224949">
    <property type="interactions" value="8"/>
</dbReference>
<dbReference type="FunCoup" id="Q9DBT5">
    <property type="interactions" value="2270"/>
</dbReference>
<dbReference type="IntAct" id="Q9DBT5">
    <property type="interactions" value="3"/>
</dbReference>
<dbReference type="MINT" id="Q9DBT5"/>
<dbReference type="STRING" id="10090.ENSMUSP00000077946"/>
<dbReference type="BindingDB" id="Q9DBT5"/>
<dbReference type="ChEMBL" id="CHEMBL5291580"/>
<dbReference type="iPTMnet" id="Q9DBT5"/>
<dbReference type="PhosphoSitePlus" id="Q9DBT5"/>
<dbReference type="SwissPalm" id="Q9DBT5"/>
<dbReference type="jPOST" id="Q9DBT5"/>
<dbReference type="PaxDb" id="10090-ENSMUSP00000099698"/>
<dbReference type="PeptideAtlas" id="Q9DBT5"/>
<dbReference type="ProteomicsDB" id="296205"/>
<dbReference type="ProteomicsDB" id="334451"/>
<dbReference type="Pumba" id="Q9DBT5"/>
<dbReference type="Antibodypedia" id="33766">
    <property type="antibodies" value="224 antibodies from 31 providers"/>
</dbReference>
<dbReference type="DNASU" id="109674"/>
<dbReference type="Ensembl" id="ENSMUST00000078912.7">
    <molecule id="Q9DBT5-2"/>
    <property type="protein sequence ID" value="ENSMUSP00000077946.6"/>
    <property type="gene ID" value="ENSMUSG00000027889.18"/>
</dbReference>
<dbReference type="Ensembl" id="ENSMUST00000102637.8">
    <molecule id="Q9DBT5-1"/>
    <property type="protein sequence ID" value="ENSMUSP00000099697.2"/>
    <property type="gene ID" value="ENSMUSG00000027889.18"/>
</dbReference>
<dbReference type="Ensembl" id="ENSMUST00000102638.8">
    <molecule id="Q9DBT5-1"/>
    <property type="protein sequence ID" value="ENSMUSP00000099698.2"/>
    <property type="gene ID" value="ENSMUSG00000027889.18"/>
</dbReference>
<dbReference type="GeneID" id="109674"/>
<dbReference type="KEGG" id="mmu:109674"/>
<dbReference type="UCSC" id="uc008qxz.2">
    <molecule id="Q9DBT5-2"/>
    <property type="organism name" value="mouse"/>
</dbReference>
<dbReference type="AGR" id="MGI:88016"/>
<dbReference type="CTD" id="271"/>
<dbReference type="MGI" id="MGI:88016">
    <property type="gene designation" value="Ampd2"/>
</dbReference>
<dbReference type="VEuPathDB" id="HostDB:ENSMUSG00000027889"/>
<dbReference type="eggNOG" id="KOG1096">
    <property type="taxonomic scope" value="Eukaryota"/>
</dbReference>
<dbReference type="GeneTree" id="ENSGT00950000183011"/>
<dbReference type="HOGENOM" id="CLU_003782_4_0_1"/>
<dbReference type="InParanoid" id="Q9DBT5"/>
<dbReference type="OMA" id="FHRKFPY"/>
<dbReference type="OrthoDB" id="1723809at2759"/>
<dbReference type="TreeFam" id="TF300439"/>
<dbReference type="Reactome" id="R-MMU-74217">
    <property type="pathway name" value="Purine salvage"/>
</dbReference>
<dbReference type="UniPathway" id="UPA00591">
    <property type="reaction ID" value="UER00663"/>
</dbReference>
<dbReference type="BioGRID-ORCS" id="109674">
    <property type="hits" value="5 hits in 77 CRISPR screens"/>
</dbReference>
<dbReference type="CD-CODE" id="CE726F99">
    <property type="entry name" value="Postsynaptic density"/>
</dbReference>
<dbReference type="ChiTaRS" id="Ampd2">
    <property type="organism name" value="mouse"/>
</dbReference>
<dbReference type="PRO" id="PR:Q9DBT5"/>
<dbReference type="Proteomes" id="UP000000589">
    <property type="component" value="Chromosome 3"/>
</dbReference>
<dbReference type="RNAct" id="Q9DBT5">
    <property type="molecule type" value="protein"/>
</dbReference>
<dbReference type="Bgee" id="ENSMUSG00000027889">
    <property type="expression patterns" value="Expressed in bone fossa and 251 other cell types or tissues"/>
</dbReference>
<dbReference type="ExpressionAtlas" id="Q9DBT5">
    <property type="expression patterns" value="baseline and differential"/>
</dbReference>
<dbReference type="GO" id="GO:0005829">
    <property type="term" value="C:cytosol"/>
    <property type="evidence" value="ECO:0007669"/>
    <property type="project" value="Ensembl"/>
</dbReference>
<dbReference type="GO" id="GO:0003876">
    <property type="term" value="F:AMP deaminase activity"/>
    <property type="evidence" value="ECO:0000315"/>
    <property type="project" value="CACAO"/>
</dbReference>
<dbReference type="GO" id="GO:0046872">
    <property type="term" value="F:metal ion binding"/>
    <property type="evidence" value="ECO:0007669"/>
    <property type="project" value="UniProtKB-KW"/>
</dbReference>
<dbReference type="GO" id="GO:0046033">
    <property type="term" value="P:AMP metabolic process"/>
    <property type="evidence" value="ECO:0000315"/>
    <property type="project" value="CACAO"/>
</dbReference>
<dbReference type="GO" id="GO:0046034">
    <property type="term" value="P:ATP metabolic process"/>
    <property type="evidence" value="ECO:0000315"/>
    <property type="project" value="CACAO"/>
</dbReference>
<dbReference type="GO" id="GO:0042632">
    <property type="term" value="P:cholesterol homeostasis"/>
    <property type="evidence" value="ECO:0000315"/>
    <property type="project" value="MGI"/>
</dbReference>
<dbReference type="GO" id="GO:0052652">
    <property type="term" value="P:cyclic purine nucleotide metabolic process"/>
    <property type="evidence" value="ECO:0000250"/>
    <property type="project" value="UniProtKB"/>
</dbReference>
<dbReference type="GO" id="GO:0097009">
    <property type="term" value="P:energy homeostasis"/>
    <property type="evidence" value="ECO:0000315"/>
    <property type="project" value="MGI"/>
</dbReference>
<dbReference type="GO" id="GO:0032263">
    <property type="term" value="P:GMP salvage"/>
    <property type="evidence" value="ECO:0000266"/>
    <property type="project" value="MGI"/>
</dbReference>
<dbReference type="GO" id="GO:0046039">
    <property type="term" value="P:GTP metabolic process"/>
    <property type="evidence" value="ECO:0000315"/>
    <property type="project" value="CACAO"/>
</dbReference>
<dbReference type="GO" id="GO:0006188">
    <property type="term" value="P:IMP biosynthetic process"/>
    <property type="evidence" value="ECO:0000315"/>
    <property type="project" value="MGI"/>
</dbReference>
<dbReference type="GO" id="GO:0032264">
    <property type="term" value="P:IMP salvage"/>
    <property type="evidence" value="ECO:0000315"/>
    <property type="project" value="MGI"/>
</dbReference>
<dbReference type="GO" id="GO:0009117">
    <property type="term" value="P:nucleotide metabolic process"/>
    <property type="evidence" value="ECO:0000315"/>
    <property type="project" value="MGI"/>
</dbReference>
<dbReference type="GO" id="GO:0072015">
    <property type="term" value="P:podocyte development"/>
    <property type="evidence" value="ECO:0000315"/>
    <property type="project" value="MGI"/>
</dbReference>
<dbReference type="CDD" id="cd01319">
    <property type="entry name" value="AMPD"/>
    <property type="match status" value="1"/>
</dbReference>
<dbReference type="FunFam" id="4.10.800.20:FF:000001">
    <property type="entry name" value="AMP deaminase"/>
    <property type="match status" value="1"/>
</dbReference>
<dbReference type="FunFam" id="3.20.20.140:FF:000035">
    <property type="entry name" value="Probable amp deaminase"/>
    <property type="match status" value="1"/>
</dbReference>
<dbReference type="Gene3D" id="4.10.800.20">
    <property type="match status" value="1"/>
</dbReference>
<dbReference type="Gene3D" id="3.20.20.140">
    <property type="entry name" value="Metal-dependent hydrolases"/>
    <property type="match status" value="1"/>
</dbReference>
<dbReference type="InterPro" id="IPR006650">
    <property type="entry name" value="A/AMP_deam_AS"/>
</dbReference>
<dbReference type="InterPro" id="IPR006329">
    <property type="entry name" value="AMPD"/>
</dbReference>
<dbReference type="InterPro" id="IPR032466">
    <property type="entry name" value="Metal_Hydrolase"/>
</dbReference>
<dbReference type="NCBIfam" id="TIGR01429">
    <property type="entry name" value="AMP_deaminase"/>
    <property type="match status" value="1"/>
</dbReference>
<dbReference type="PANTHER" id="PTHR11359">
    <property type="entry name" value="AMP DEAMINASE"/>
    <property type="match status" value="1"/>
</dbReference>
<dbReference type="PANTHER" id="PTHR11359:SF3">
    <property type="entry name" value="AMP DEAMINASE 2"/>
    <property type="match status" value="1"/>
</dbReference>
<dbReference type="Pfam" id="PF19326">
    <property type="entry name" value="AMP_deaminase"/>
    <property type="match status" value="1"/>
</dbReference>
<dbReference type="PIRSF" id="PIRSF001251">
    <property type="entry name" value="AMP_deaminase_met"/>
    <property type="match status" value="1"/>
</dbReference>
<dbReference type="SUPFAM" id="SSF51556">
    <property type="entry name" value="Metallo-dependent hydrolases"/>
    <property type="match status" value="1"/>
</dbReference>
<dbReference type="PROSITE" id="PS00485">
    <property type="entry name" value="A_DEAMINASE"/>
    <property type="match status" value="1"/>
</dbReference>
<sequence length="824" mass="94696">MASYPGPGKSKAKYPFKKRAGLQASAAAPEARSGLGASPLQSARSLPGNAPCLKHFPLDLRTSMDGKCKEIAEELFSRSLAESELRSAPYEFPEESPIEQLEERRQRLERQISQDVKLEPDILLRAKQDFLKTDSDSDLQLYKEQGEGQGDRGLWERDVVLEREFQRVIISGEEKCGVPFTDLLDAAKSVVRALFIREKYMALSLQSFCPTTRRYLQQLAEKPLETRTYEQSPDTPVSADAPVHPPALEQHPYEHCEPSAMPGDLGLGLRMVRGVVHVYTRRDPDEHCPEVELPYPDLQEFVADVNVLMALIINGPIKSFCYRRLQYLSSKFQMHVLLNEMKELAAQKKVPHRDFYNIRKVDTHIHASSCMNQKHLLRFIKRAMKRHLEEIVHVEQGREQTLREVFESMNLTAYDLSVDTLDVHADRNTFHRFDKFNAKYNPIGESVLREIFIKTDNKISGKYFAHIIKEVMADLEESKYQNAELRLSIYGRSRDEWDKLARWAVNHKVHSPNVRWLVQVPRLFDVYRTKGQLANFQEMLENIFLPLFEATVHPASHPELHLFLEHVDGFDSVDDESKPENHVFNLESPLPEAWVEEDNPPYAYYLYYTFANMAMLNHLRRQRGFHTFVLRPHCGEAGPIHHLVSAFMLAENISHGLLLRKAPVLQYLYYLAQIGIAMSPLSNNSLFLSYHRNPLPEYLSRGLMVSLSTDDPLQFHFTKEPLMEEYSIATQVWKLSSCDMCELARNSVLMSGFSHKVKSHWLGPNYTKEGPEGNDIRRTNVPDIRVGYRYETLCQELALITQAVQSEMLETIPEEVGIVMSPGP</sequence>
<comment type="function">
    <text evidence="5">AMP deaminase plays a critical role in energy metabolism. Catalyzes the deamination of AMP to IMP and plays an important role in the purine nucleotide cycle.</text>
</comment>
<comment type="catalytic activity">
    <reaction evidence="7">
        <text>AMP + H2O + H(+) = IMP + NH4(+)</text>
        <dbReference type="Rhea" id="RHEA:14777"/>
        <dbReference type="ChEBI" id="CHEBI:15377"/>
        <dbReference type="ChEBI" id="CHEBI:15378"/>
        <dbReference type="ChEBI" id="CHEBI:28938"/>
        <dbReference type="ChEBI" id="CHEBI:58053"/>
        <dbReference type="ChEBI" id="CHEBI:456215"/>
        <dbReference type="EC" id="3.5.4.6"/>
    </reaction>
    <physiologicalReaction direction="left-to-right" evidence="7">
        <dbReference type="Rhea" id="RHEA:14778"/>
    </physiologicalReaction>
</comment>
<comment type="cofactor">
    <cofactor evidence="1">
        <name>Zn(2+)</name>
        <dbReference type="ChEBI" id="CHEBI:29105"/>
    </cofactor>
    <text evidence="1">Binds 1 zinc ion per subunit.</text>
</comment>
<comment type="pathway">
    <text evidence="7">Purine metabolism; IMP biosynthesis via salvage pathway; IMP from AMP: step 1/1.</text>
</comment>
<comment type="subunit">
    <text evidence="1">Homotetramer.</text>
</comment>
<comment type="alternative products">
    <event type="alternative splicing"/>
    <isoform>
        <id>Q9DBT5-2</id>
        <name>2</name>
        <sequence type="displayed"/>
    </isoform>
    <isoform>
        <id>Q9DBT5-1</id>
        <name>1</name>
        <sequence type="described" ref="VSP_061947"/>
    </isoform>
</comment>
<comment type="disruption phenotype">
    <text evidence="5">Mice have normal brain histology.</text>
</comment>
<comment type="similarity">
    <text evidence="6">Belongs to the metallo-dependent hydrolases superfamily. Adenosine and AMP deaminases family.</text>
</comment>
<comment type="sequence caution" evidence="6">
    <conflict type="erroneous initiation">
        <sequence resource="EMBL-CDS" id="AAH16662"/>
    </conflict>
    <text>Truncated N-terminus.</text>
</comment>
<gene>
    <name evidence="8" type="primary">Ampd2</name>
</gene>
<name>AMPD2_MOUSE</name>